<gene>
    <name type="primary">USF2</name>
    <name type="synonym">BHLHB12</name>
</gene>
<feature type="chain" id="PRO_0000127500" description="Upstream stimulatory factor 2">
    <location>
        <begin position="1"/>
        <end position="346"/>
    </location>
</feature>
<feature type="domain" description="bHLH" evidence="2">
    <location>
        <begin position="235"/>
        <end position="290"/>
    </location>
</feature>
<feature type="region of interest" description="Disordered" evidence="3">
    <location>
        <begin position="1"/>
        <end position="44"/>
    </location>
</feature>
<feature type="region of interest" description="Disordered" evidence="3">
    <location>
        <begin position="215"/>
        <end position="244"/>
    </location>
</feature>
<feature type="region of interest" description="Leucine-zipper">
    <location>
        <begin position="307"/>
        <end position="328"/>
    </location>
</feature>
<feature type="compositionally biased region" description="Low complexity" evidence="3">
    <location>
        <begin position="11"/>
        <end position="20"/>
    </location>
</feature>
<feature type="compositionally biased region" description="Basic and acidic residues" evidence="3">
    <location>
        <begin position="226"/>
        <end position="244"/>
    </location>
</feature>
<feature type="splice variant" id="VSP_047804" description="In isoform USF2c." evidence="4">
    <location>
        <begin position="76"/>
        <end position="206"/>
    </location>
</feature>
<feature type="splice variant" id="VSP_002164" description="In isoform USF2B." evidence="5">
    <location>
        <begin position="77"/>
        <end position="143"/>
    </location>
</feature>
<feature type="splice variant" id="VSP_002165" description="In isoform USF2A-delta-H." evidence="5">
    <location>
        <begin position="275"/>
        <end position="282"/>
    </location>
</feature>
<feature type="sequence conflict" description="In Ref. 7." evidence="6" ref="7">
    <original>QTAVAITSVQQAAFGDHNI</original>
    <variation>GGGTSGGRGSGIQTRVQHV</variation>
    <location>
        <begin position="46"/>
        <end position="64"/>
    </location>
</feature>
<feature type="sequence conflict" description="In Ref. 8; M77476." evidence="6" ref="8">
    <original>GDTAGAVS</original>
    <variation>EFHSWRRH</variation>
    <location>
        <begin position="93"/>
        <end position="100"/>
    </location>
</feature>
<feature type="sequence conflict" description="In Ref. 8; M77476." evidence="6" ref="8">
    <original>A</original>
    <variation>V</variation>
    <location>
        <position position="122"/>
    </location>
</feature>
<feature type="sequence conflict" description="In Ref. 4; CAG38742." evidence="6" ref="4">
    <original>Q</original>
    <variation>R</variation>
    <location>
        <position position="308"/>
    </location>
</feature>
<feature type="turn" evidence="7">
    <location>
        <begin position="237"/>
        <end position="239"/>
    </location>
</feature>
<feature type="helix" evidence="7">
    <location>
        <begin position="240"/>
        <end position="261"/>
    </location>
</feature>
<feature type="turn" evidence="7">
    <location>
        <begin position="263"/>
        <end position="267"/>
    </location>
</feature>
<feature type="turn" evidence="7">
    <location>
        <begin position="271"/>
        <end position="274"/>
    </location>
</feature>
<feature type="helix" evidence="7">
    <location>
        <begin position="276"/>
        <end position="302"/>
    </location>
</feature>
<feature type="helix" evidence="7">
    <location>
        <begin position="304"/>
        <end position="333"/>
    </location>
</feature>
<feature type="turn" evidence="7">
    <location>
        <begin position="337"/>
        <end position="340"/>
    </location>
</feature>
<accession>Q15853</accession>
<accession>O00671</accession>
<accession>O00709</accession>
<accession>Q05750</accession>
<accession>Q07952</accession>
<accession>Q15851</accession>
<accession>Q15852</accession>
<accession>Q6FI33</accession>
<accession>Q6YI47</accession>
<protein>
    <recommendedName>
        <fullName>Upstream stimulatory factor 2</fullName>
    </recommendedName>
    <alternativeName>
        <fullName>Class B basic helix-loop-helix protein 12</fullName>
        <shortName>bHLHb12</shortName>
    </alternativeName>
    <alternativeName>
        <fullName>FOS-interacting protein</fullName>
        <shortName>FIP</shortName>
    </alternativeName>
    <alternativeName>
        <fullName>Major late transcription factor 2</fullName>
    </alternativeName>
    <alternativeName>
        <fullName>Upstream transcription factor 2</fullName>
    </alternativeName>
</protein>
<dbReference type="EMBL" id="X90824">
    <property type="protein sequence ID" value="CAA62339.1"/>
    <property type="molecule type" value="mRNA"/>
</dbReference>
<dbReference type="EMBL" id="X90825">
    <property type="protein sequence ID" value="CAA62340.1"/>
    <property type="molecule type" value="mRNA"/>
</dbReference>
<dbReference type="EMBL" id="X90826">
    <property type="protein sequence ID" value="CAA62341.1"/>
    <property type="molecule type" value="mRNA"/>
</dbReference>
<dbReference type="EMBL" id="Y07661">
    <property type="protein sequence ID" value="CAA68942.1"/>
    <property type="molecule type" value="Genomic_DNA"/>
</dbReference>
<dbReference type="EMBL" id="AY147880">
    <property type="protein sequence ID" value="AAN63092.1"/>
    <property type="molecule type" value="mRNA"/>
</dbReference>
<dbReference type="EMBL" id="CR536504">
    <property type="protein sequence ID" value="CAG38742.1"/>
    <property type="molecule type" value="mRNA"/>
</dbReference>
<dbReference type="EMBL" id="AD000684">
    <property type="protein sequence ID" value="AAB51179.1"/>
    <property type="molecule type" value="Genomic_DNA"/>
</dbReference>
<dbReference type="EMBL" id="BC049821">
    <property type="protein sequence ID" value="AAH49821.1"/>
    <property type="molecule type" value="mRNA"/>
</dbReference>
<dbReference type="EMBL" id="S50537">
    <property type="protein sequence ID" value="AAB24368.1"/>
    <property type="molecule type" value="mRNA"/>
</dbReference>
<dbReference type="EMBL" id="M77476">
    <property type="status" value="NOT_ANNOTATED_CDS"/>
    <property type="molecule type" value="mRNA"/>
</dbReference>
<dbReference type="CCDS" id="CCDS12452.1">
    <molecule id="Q15853-1"/>
</dbReference>
<dbReference type="CCDS" id="CCDS12453.1">
    <molecule id="Q15853-3"/>
</dbReference>
<dbReference type="CCDS" id="CCDS82329.1">
    <molecule id="Q15853-4"/>
</dbReference>
<dbReference type="PIR" id="I54074">
    <property type="entry name" value="I54074"/>
</dbReference>
<dbReference type="RefSeq" id="NP_001308079.1">
    <molecule id="Q15853-4"/>
    <property type="nucleotide sequence ID" value="NM_001321150.2"/>
</dbReference>
<dbReference type="RefSeq" id="NP_003358.1">
    <molecule id="Q15853-1"/>
    <property type="nucleotide sequence ID" value="NM_003367.4"/>
</dbReference>
<dbReference type="RefSeq" id="NP_997174.1">
    <molecule id="Q15853-3"/>
    <property type="nucleotide sequence ID" value="NM_207291.3"/>
</dbReference>
<dbReference type="PDB" id="8IA3">
    <property type="method" value="X-ray"/>
    <property type="resolution" value="3.50 A"/>
    <property type="chains" value="A/B/E/F=235-346"/>
</dbReference>
<dbReference type="PDBsum" id="8IA3"/>
<dbReference type="SMR" id="Q15853"/>
<dbReference type="BioGRID" id="113238">
    <property type="interactions" value="41"/>
</dbReference>
<dbReference type="ComplexPortal" id="CPX-3079">
    <property type="entry name" value="USF1-USF2 upstream stimulatory factor complex"/>
</dbReference>
<dbReference type="ComplexPortal" id="CPX-3083">
    <property type="entry name" value="USF2 upstream stimulatory factor complex"/>
</dbReference>
<dbReference type="CORUM" id="Q15853"/>
<dbReference type="FunCoup" id="Q15853">
    <property type="interactions" value="3675"/>
</dbReference>
<dbReference type="IntAct" id="Q15853">
    <property type="interactions" value="24"/>
</dbReference>
<dbReference type="MINT" id="Q15853"/>
<dbReference type="STRING" id="9606.ENSP00000222305"/>
<dbReference type="GlyCosmos" id="Q15853">
    <property type="glycosylation" value="3 sites, 1 glycan"/>
</dbReference>
<dbReference type="GlyGen" id="Q15853">
    <property type="glycosylation" value="3 sites, 1 O-linked glycan (3 sites)"/>
</dbReference>
<dbReference type="iPTMnet" id="Q15853"/>
<dbReference type="MetOSite" id="Q15853"/>
<dbReference type="PhosphoSitePlus" id="Q15853"/>
<dbReference type="BioMuta" id="USF2"/>
<dbReference type="DMDM" id="2833271"/>
<dbReference type="jPOST" id="Q15853"/>
<dbReference type="MassIVE" id="Q15853"/>
<dbReference type="PaxDb" id="9606-ENSP00000222305"/>
<dbReference type="PeptideAtlas" id="Q15853"/>
<dbReference type="ProteomicsDB" id="60794">
    <molecule id="Q15853-1"/>
</dbReference>
<dbReference type="ProteomicsDB" id="60795">
    <molecule id="Q15853-2"/>
</dbReference>
<dbReference type="ProteomicsDB" id="60796">
    <molecule id="Q15853-3"/>
</dbReference>
<dbReference type="ProteomicsDB" id="67853"/>
<dbReference type="Pumba" id="Q15853"/>
<dbReference type="Antibodypedia" id="15859">
    <property type="antibodies" value="394 antibodies from 35 providers"/>
</dbReference>
<dbReference type="DNASU" id="7392"/>
<dbReference type="Ensembl" id="ENST00000222305.8">
    <molecule id="Q15853-1"/>
    <property type="protein sequence ID" value="ENSP00000222305.2"/>
    <property type="gene ID" value="ENSG00000105698.16"/>
</dbReference>
<dbReference type="Ensembl" id="ENST00000343550.9">
    <molecule id="Q15853-3"/>
    <property type="protein sequence ID" value="ENSP00000340633.4"/>
    <property type="gene ID" value="ENSG00000105698.16"/>
</dbReference>
<dbReference type="Ensembl" id="ENST00000379134.7">
    <molecule id="Q15853-4"/>
    <property type="protein sequence ID" value="ENSP00000368429.3"/>
    <property type="gene ID" value="ENSG00000105698.16"/>
</dbReference>
<dbReference type="Ensembl" id="ENST00000595068.5">
    <molecule id="Q15853-2"/>
    <property type="protein sequence ID" value="ENSP00000471099.1"/>
    <property type="gene ID" value="ENSG00000105698.16"/>
</dbReference>
<dbReference type="GeneID" id="7392"/>
<dbReference type="KEGG" id="hsa:7392"/>
<dbReference type="MANE-Select" id="ENST00000222305.8">
    <property type="protein sequence ID" value="ENSP00000222305.2"/>
    <property type="RefSeq nucleotide sequence ID" value="NM_003367.4"/>
    <property type="RefSeq protein sequence ID" value="NP_003358.1"/>
</dbReference>
<dbReference type="UCSC" id="uc002nyq.2">
    <molecule id="Q15853-1"/>
    <property type="organism name" value="human"/>
</dbReference>
<dbReference type="AGR" id="HGNC:12594"/>
<dbReference type="CTD" id="7392"/>
<dbReference type="DisGeNET" id="7392"/>
<dbReference type="GeneCards" id="USF2"/>
<dbReference type="HGNC" id="HGNC:12594">
    <property type="gene designation" value="USF2"/>
</dbReference>
<dbReference type="HPA" id="ENSG00000105698">
    <property type="expression patterns" value="Low tissue specificity"/>
</dbReference>
<dbReference type="MIM" id="600390">
    <property type="type" value="gene"/>
</dbReference>
<dbReference type="neXtProt" id="NX_Q15853"/>
<dbReference type="OpenTargets" id="ENSG00000105698"/>
<dbReference type="PharmGKB" id="PA37224"/>
<dbReference type="VEuPathDB" id="HostDB:ENSG00000105698"/>
<dbReference type="eggNOG" id="KOG1318">
    <property type="taxonomic scope" value="Eukaryota"/>
</dbReference>
<dbReference type="GeneTree" id="ENSGT00940000160704"/>
<dbReference type="HOGENOM" id="CLU_070485_2_0_1"/>
<dbReference type="InParanoid" id="Q15853"/>
<dbReference type="OMA" id="RDRINNW"/>
<dbReference type="OrthoDB" id="9532312at2759"/>
<dbReference type="PAN-GO" id="Q15853">
    <property type="GO annotations" value="3 GO annotations based on evolutionary models"/>
</dbReference>
<dbReference type="PhylomeDB" id="Q15853"/>
<dbReference type="TreeFam" id="TF323338"/>
<dbReference type="PathwayCommons" id="Q15853"/>
<dbReference type="Reactome" id="R-HSA-9018519">
    <property type="pathway name" value="Estrogen-dependent gene expression"/>
</dbReference>
<dbReference type="SignaLink" id="Q15853"/>
<dbReference type="SIGNOR" id="Q15853"/>
<dbReference type="BioGRID-ORCS" id="7392">
    <property type="hits" value="208 hits in 1186 CRISPR screens"/>
</dbReference>
<dbReference type="ChiTaRS" id="USF2">
    <property type="organism name" value="human"/>
</dbReference>
<dbReference type="GeneWiki" id="USF2"/>
<dbReference type="GenomeRNAi" id="7392"/>
<dbReference type="Pharos" id="Q15853">
    <property type="development level" value="Tbio"/>
</dbReference>
<dbReference type="PRO" id="PR:Q15853"/>
<dbReference type="Proteomes" id="UP000005640">
    <property type="component" value="Chromosome 19"/>
</dbReference>
<dbReference type="RNAct" id="Q15853">
    <property type="molecule type" value="protein"/>
</dbReference>
<dbReference type="Bgee" id="ENSG00000105698">
    <property type="expression patterns" value="Expressed in right hemisphere of cerebellum and 209 other cell types or tissues"/>
</dbReference>
<dbReference type="ExpressionAtlas" id="Q15853">
    <property type="expression patterns" value="baseline and differential"/>
</dbReference>
<dbReference type="GO" id="GO:0000785">
    <property type="term" value="C:chromatin"/>
    <property type="evidence" value="ECO:0000247"/>
    <property type="project" value="NTNU_SB"/>
</dbReference>
<dbReference type="GO" id="GO:0043231">
    <property type="term" value="C:intracellular membrane-bounded organelle"/>
    <property type="evidence" value="ECO:0000314"/>
    <property type="project" value="HPA"/>
</dbReference>
<dbReference type="GO" id="GO:0005654">
    <property type="term" value="C:nucleoplasm"/>
    <property type="evidence" value="ECO:0000314"/>
    <property type="project" value="HPA"/>
</dbReference>
<dbReference type="GO" id="GO:0005634">
    <property type="term" value="C:nucleus"/>
    <property type="evidence" value="ECO:0000314"/>
    <property type="project" value="BHF-UCL"/>
</dbReference>
<dbReference type="GO" id="GO:0043425">
    <property type="term" value="F:bHLH transcription factor binding"/>
    <property type="evidence" value="ECO:0000353"/>
    <property type="project" value="BHF-UCL"/>
</dbReference>
<dbReference type="GO" id="GO:0001228">
    <property type="term" value="F:DNA-binding transcription activator activity, RNA polymerase II-specific"/>
    <property type="evidence" value="ECO:0000315"/>
    <property type="project" value="BHF-UCL"/>
</dbReference>
<dbReference type="GO" id="GO:0003700">
    <property type="term" value="F:DNA-binding transcription factor activity"/>
    <property type="evidence" value="ECO:0000304"/>
    <property type="project" value="ProtInc"/>
</dbReference>
<dbReference type="GO" id="GO:0000981">
    <property type="term" value="F:DNA-binding transcription factor activity, RNA polymerase II-specific"/>
    <property type="evidence" value="ECO:0000315"/>
    <property type="project" value="BHF-UCL"/>
</dbReference>
<dbReference type="GO" id="GO:0046982">
    <property type="term" value="F:protein heterodimerization activity"/>
    <property type="evidence" value="ECO:0000353"/>
    <property type="project" value="BHF-UCL"/>
</dbReference>
<dbReference type="GO" id="GO:0042803">
    <property type="term" value="F:protein homodimerization activity"/>
    <property type="evidence" value="ECO:0000353"/>
    <property type="project" value="BHF-UCL"/>
</dbReference>
<dbReference type="GO" id="GO:0000978">
    <property type="term" value="F:RNA polymerase II cis-regulatory region sequence-specific DNA binding"/>
    <property type="evidence" value="ECO:0000318"/>
    <property type="project" value="GO_Central"/>
</dbReference>
<dbReference type="GO" id="GO:0043565">
    <property type="term" value="F:sequence-specific DNA binding"/>
    <property type="evidence" value="ECO:0000314"/>
    <property type="project" value="BHF-UCL"/>
</dbReference>
<dbReference type="GO" id="GO:1990837">
    <property type="term" value="F:sequence-specific double-stranded DNA binding"/>
    <property type="evidence" value="ECO:0000314"/>
    <property type="project" value="ARUK-UCL"/>
</dbReference>
<dbReference type="GO" id="GO:0071333">
    <property type="term" value="P:cellular response to glucose stimulus"/>
    <property type="evidence" value="ECO:0000315"/>
    <property type="project" value="BHF-UCL"/>
</dbReference>
<dbReference type="GO" id="GO:0010255">
    <property type="term" value="P:glucose mediated signaling pathway"/>
    <property type="evidence" value="ECO:0000315"/>
    <property type="project" value="BHF-UCL"/>
</dbReference>
<dbReference type="GO" id="GO:0007595">
    <property type="term" value="P:lactation"/>
    <property type="evidence" value="ECO:0007669"/>
    <property type="project" value="Ensembl"/>
</dbReference>
<dbReference type="GO" id="GO:0019086">
    <property type="term" value="P:late viral transcription"/>
    <property type="evidence" value="ECO:0000305"/>
    <property type="project" value="BHF-UCL"/>
</dbReference>
<dbReference type="GO" id="GO:0055088">
    <property type="term" value="P:lipid homeostasis"/>
    <property type="evidence" value="ECO:0000250"/>
    <property type="project" value="BHF-UCL"/>
</dbReference>
<dbReference type="GO" id="GO:0045944">
    <property type="term" value="P:positive regulation of transcription by RNA polymerase II"/>
    <property type="evidence" value="ECO:0000315"/>
    <property type="project" value="BHF-UCL"/>
</dbReference>
<dbReference type="GO" id="GO:0000432">
    <property type="term" value="P:positive regulation of transcription from RNA polymerase II promoter by glucose"/>
    <property type="evidence" value="ECO:0000250"/>
    <property type="project" value="BHF-UCL"/>
</dbReference>
<dbReference type="GO" id="GO:0006357">
    <property type="term" value="P:regulation of transcription by RNA polymerase II"/>
    <property type="evidence" value="ECO:0000318"/>
    <property type="project" value="GO_Central"/>
</dbReference>
<dbReference type="GO" id="GO:0000430">
    <property type="term" value="P:regulation of transcription from RNA polymerase II promoter by glucose"/>
    <property type="evidence" value="ECO:0000305"/>
    <property type="project" value="BHF-UCL"/>
</dbReference>
<dbReference type="CDD" id="cd18923">
    <property type="entry name" value="bHLHzip_USF2"/>
    <property type="match status" value="1"/>
</dbReference>
<dbReference type="FunFam" id="4.10.280.10:FF:000045">
    <property type="entry name" value="upstream stimulatory factor 2 isoform X1"/>
    <property type="match status" value="1"/>
</dbReference>
<dbReference type="Gene3D" id="4.10.280.10">
    <property type="entry name" value="Helix-loop-helix DNA-binding domain"/>
    <property type="match status" value="1"/>
</dbReference>
<dbReference type="InterPro" id="IPR011598">
    <property type="entry name" value="bHLH_dom"/>
</dbReference>
<dbReference type="InterPro" id="IPR036638">
    <property type="entry name" value="HLH_DNA-bd_sf"/>
</dbReference>
<dbReference type="InterPro" id="IPR051732">
    <property type="entry name" value="USF"/>
</dbReference>
<dbReference type="PANTHER" id="PTHR46117">
    <property type="entry name" value="FI24210P1"/>
    <property type="match status" value="1"/>
</dbReference>
<dbReference type="PANTHER" id="PTHR46117:SF2">
    <property type="entry name" value="UPSTREAM STIMULATORY FACTOR 2"/>
    <property type="match status" value="1"/>
</dbReference>
<dbReference type="Pfam" id="PF00010">
    <property type="entry name" value="HLH"/>
    <property type="match status" value="1"/>
</dbReference>
<dbReference type="SMART" id="SM00353">
    <property type="entry name" value="HLH"/>
    <property type="match status" value="1"/>
</dbReference>
<dbReference type="SUPFAM" id="SSF47459">
    <property type="entry name" value="HLH, helix-loop-helix DNA-binding domain"/>
    <property type="match status" value="1"/>
</dbReference>
<dbReference type="PROSITE" id="PS50888">
    <property type="entry name" value="BHLH"/>
    <property type="match status" value="1"/>
</dbReference>
<sequence length="346" mass="36955">MDMLDPGLDPAASATAAAAASHDKGPEAEEGVELQEGGDGPGAEEQTAVAITSVQQAAFGDHNIQYQFRTETNGGQVTYRVVQVTDGQLDGQGDTAGAVSVVSTAAFAGGQQAVTQVGVDGAAQRPGPAAASVPPGPAAPFPLAVIQNPFSNGGSPAAEAVSGEARFAYFPASSVGDTTAVSVQTTDQSLQAGGQFYVMMTPQDVLQTGTQRTIAPRTHPYSPKIDGTRTPRDERRRAQHNEVERRRRDKINNWIVQLSKIIPDCNADNSKTGASKGGILSKACDYIRELRQTNQRMQETFKEAERLQMDNELLRQQIEELKNENALLRAQLQQHNLEMVGEGTRQ</sequence>
<comment type="function">
    <text>Transcription factor that binds to a symmetrical DNA sequence (E-boxes) (5'-CACGTG-3') that is found in a variety of viral and cellular promoters.</text>
</comment>
<comment type="subunit">
    <text evidence="1">Interacts with MAF (By similarity). Efficient DNA binding requires dimerization with another bHLH protein. Binds DNA as a homodimer or a heterodimer (USF1/USF2). In vivo, the USF1/USF2A heterodimer represents over 66% of the usf binding activity whereas the USF1 and USF2A homodimers represent less than 10%. The USF1/USF2B heterodimer accounted for almost 15% in some cell.</text>
</comment>
<comment type="interaction">
    <interactant intactId="EBI-1055994">
        <id>Q15853</id>
    </interactant>
    <interactant intactId="EBI-10198738">
        <id>Q6FG41</id>
        <label>FOS</label>
    </interactant>
    <organismsDiffer>false</organismsDiffer>
    <experiments>3</experiments>
</comment>
<comment type="interaction">
    <interactant intactId="EBI-1055994">
        <id>Q15853</id>
    </interactant>
    <interactant intactId="EBI-741037">
        <id>Q9BRK4</id>
        <label>LZTS2</label>
    </interactant>
    <organismsDiffer>false</organismsDiffer>
    <experiments>3</experiments>
</comment>
<comment type="interaction">
    <interactant intactId="EBI-1055994">
        <id>Q15853</id>
    </interactant>
    <interactant intactId="EBI-6427252">
        <id>Q15562</id>
        <label>TEAD2</label>
    </interactant>
    <organismsDiffer>false</organismsDiffer>
    <experiments>3</experiments>
</comment>
<comment type="subcellular location">
    <subcellularLocation>
        <location>Nucleus</location>
    </subcellularLocation>
</comment>
<comment type="alternative products">
    <event type="alternative splicing"/>
    <isoform>
        <id>Q15853-1</id>
        <name>USF2A</name>
        <sequence type="displayed"/>
    </isoform>
    <isoform>
        <id>Q15853-2</id>
        <name>USF2A-delta-H</name>
        <sequence type="described" ref="VSP_002165"/>
    </isoform>
    <isoform>
        <id>Q15853-3</id>
        <name>USF2B</name>
        <sequence type="described" ref="VSP_002164"/>
    </isoform>
    <isoform>
        <id>Q15853-4</id>
        <name>USF2c</name>
        <sequence type="described" ref="VSP_047804"/>
    </isoform>
    <text>Additional isoforms seem to exist.</text>
</comment>
<comment type="tissue specificity">
    <text>Ubiquitous.</text>
</comment>
<comment type="miscellaneous">
    <molecule>Isoform USF2c</molecule>
    <text evidence="6">Can bind as a homodimer to the E-box of the cathepsin B (CTSB) promoter.</text>
</comment>
<proteinExistence type="evidence at protein level"/>
<organism>
    <name type="scientific">Homo sapiens</name>
    <name type="common">Human</name>
    <dbReference type="NCBI Taxonomy" id="9606"/>
    <lineage>
        <taxon>Eukaryota</taxon>
        <taxon>Metazoa</taxon>
        <taxon>Chordata</taxon>
        <taxon>Craniata</taxon>
        <taxon>Vertebrata</taxon>
        <taxon>Euteleostomi</taxon>
        <taxon>Mammalia</taxon>
        <taxon>Eutheria</taxon>
        <taxon>Euarchontoglires</taxon>
        <taxon>Primates</taxon>
        <taxon>Haplorrhini</taxon>
        <taxon>Catarrhini</taxon>
        <taxon>Hominidae</taxon>
        <taxon>Homo</taxon>
    </lineage>
</organism>
<keyword id="KW-0002">3D-structure</keyword>
<keyword id="KW-0025">Alternative splicing</keyword>
<keyword id="KW-0238">DNA-binding</keyword>
<keyword id="KW-0539">Nucleus</keyword>
<keyword id="KW-1267">Proteomics identification</keyword>
<keyword id="KW-1185">Reference proteome</keyword>
<keyword id="KW-0804">Transcription</keyword>
<keyword id="KW-0805">Transcription regulation</keyword>
<name>USF2_HUMAN</name>
<reference key="1">
    <citation type="journal article" date="1996" name="J. Biol. Chem.">
        <title>Immunochemical characterization and transacting properties of upstream stimulatory factor isoforms.</title>
        <authorList>
            <person name="Viollet B."/>
            <person name="Lefrancois-Martinez A.-M."/>
            <person name="Henrion A."/>
            <person name="Kahn A."/>
            <person name="Raymondjean M."/>
            <person name="Martinez A."/>
        </authorList>
    </citation>
    <scope>NUCLEOTIDE SEQUENCE [MRNA] (ISOFORMS USF2A; USF2B AND USF2A-DELTA-H)</scope>
    <source>
        <tissue>Liver</tissue>
    </source>
</reference>
<reference key="2">
    <citation type="journal article" date="1996" name="Genomics">
        <title>Structure, sequence, and chromosome 19 localization of human USF2 and its rearrangement in a patient with multicystic renal dysplasia.</title>
        <authorList>
            <person name="Groenen P.M.A."/>
            <person name="Garcia E."/>
            <person name="Debeer P."/>
            <person name="Devriendt K."/>
            <person name="Fryns J.-P."/>
            <person name="van de Ven W.J.M."/>
        </authorList>
    </citation>
    <scope>NUCLEOTIDE SEQUENCE [GENOMIC DNA / MRNA]</scope>
</reference>
<reference key="3">
    <citation type="journal article" date="2004" name="Gene">
        <title>Isolation of a novel USF2 isoform: repressor of cathepsin B expression.</title>
        <authorList>
            <person name="Yan S."/>
            <person name="Sloane B.F."/>
        </authorList>
    </citation>
    <scope>NUCLEOTIDE SEQUENCE [MRNA] (ISOFORM USF2C)</scope>
</reference>
<reference key="4">
    <citation type="submission" date="2004-06" db="EMBL/GenBank/DDBJ databases">
        <title>Cloning of human full open reading frames in Gateway(TM) system entry vector (pDONR201).</title>
        <authorList>
            <person name="Halleck A."/>
            <person name="Ebert L."/>
            <person name="Mkoundinya M."/>
            <person name="Schick M."/>
            <person name="Eisenstein S."/>
            <person name="Neubert P."/>
            <person name="Kstrang K."/>
            <person name="Schatten R."/>
            <person name="Shen B."/>
            <person name="Henze S."/>
            <person name="Mar W."/>
            <person name="Korn B."/>
            <person name="Zuo D."/>
            <person name="Hu Y."/>
            <person name="LaBaer J."/>
        </authorList>
    </citation>
    <scope>NUCLEOTIDE SEQUENCE [LARGE SCALE MRNA] (ISOFORM USF2A)</scope>
</reference>
<reference key="5">
    <citation type="journal article" date="2004" name="Nature">
        <title>The DNA sequence and biology of human chromosome 19.</title>
        <authorList>
            <person name="Grimwood J."/>
            <person name="Gordon L.A."/>
            <person name="Olsen A.S."/>
            <person name="Terry A."/>
            <person name="Schmutz J."/>
            <person name="Lamerdin J.E."/>
            <person name="Hellsten U."/>
            <person name="Goodstein D."/>
            <person name="Couronne O."/>
            <person name="Tran-Gyamfi M."/>
            <person name="Aerts A."/>
            <person name="Altherr M."/>
            <person name="Ashworth L."/>
            <person name="Bajorek E."/>
            <person name="Black S."/>
            <person name="Branscomb E."/>
            <person name="Caenepeel S."/>
            <person name="Carrano A.V."/>
            <person name="Caoile C."/>
            <person name="Chan Y.M."/>
            <person name="Christensen M."/>
            <person name="Cleland C.A."/>
            <person name="Copeland A."/>
            <person name="Dalin E."/>
            <person name="Dehal P."/>
            <person name="Denys M."/>
            <person name="Detter J.C."/>
            <person name="Escobar J."/>
            <person name="Flowers D."/>
            <person name="Fotopulos D."/>
            <person name="Garcia C."/>
            <person name="Georgescu A.M."/>
            <person name="Glavina T."/>
            <person name="Gomez M."/>
            <person name="Gonzales E."/>
            <person name="Groza M."/>
            <person name="Hammon N."/>
            <person name="Hawkins T."/>
            <person name="Haydu L."/>
            <person name="Ho I."/>
            <person name="Huang W."/>
            <person name="Israni S."/>
            <person name="Jett J."/>
            <person name="Kadner K."/>
            <person name="Kimball H."/>
            <person name="Kobayashi A."/>
            <person name="Larionov V."/>
            <person name="Leem S.-H."/>
            <person name="Lopez F."/>
            <person name="Lou Y."/>
            <person name="Lowry S."/>
            <person name="Malfatti S."/>
            <person name="Martinez D."/>
            <person name="McCready P.M."/>
            <person name="Medina C."/>
            <person name="Morgan J."/>
            <person name="Nelson K."/>
            <person name="Nolan M."/>
            <person name="Ovcharenko I."/>
            <person name="Pitluck S."/>
            <person name="Pollard M."/>
            <person name="Popkie A.P."/>
            <person name="Predki P."/>
            <person name="Quan G."/>
            <person name="Ramirez L."/>
            <person name="Rash S."/>
            <person name="Retterer J."/>
            <person name="Rodriguez A."/>
            <person name="Rogers S."/>
            <person name="Salamov A."/>
            <person name="Salazar A."/>
            <person name="She X."/>
            <person name="Smith D."/>
            <person name="Slezak T."/>
            <person name="Solovyev V."/>
            <person name="Thayer N."/>
            <person name="Tice H."/>
            <person name="Tsai M."/>
            <person name="Ustaszewska A."/>
            <person name="Vo N."/>
            <person name="Wagner M."/>
            <person name="Wheeler J."/>
            <person name="Wu K."/>
            <person name="Xie G."/>
            <person name="Yang J."/>
            <person name="Dubchak I."/>
            <person name="Furey T.S."/>
            <person name="DeJong P."/>
            <person name="Dickson M."/>
            <person name="Gordon D."/>
            <person name="Eichler E.E."/>
            <person name="Pennacchio L.A."/>
            <person name="Richardson P."/>
            <person name="Stubbs L."/>
            <person name="Rokhsar D.S."/>
            <person name="Myers R.M."/>
            <person name="Rubin E.M."/>
            <person name="Lucas S.M."/>
        </authorList>
    </citation>
    <scope>NUCLEOTIDE SEQUENCE [LARGE SCALE GENOMIC DNA]</scope>
</reference>
<reference key="6">
    <citation type="journal article" date="2004" name="Genome Res.">
        <title>The status, quality, and expansion of the NIH full-length cDNA project: the Mammalian Gene Collection (MGC).</title>
        <authorList>
            <consortium name="The MGC Project Team"/>
        </authorList>
    </citation>
    <scope>NUCLEOTIDE SEQUENCE [LARGE SCALE MRNA] (ISOFORM USF2A)</scope>
    <source>
        <tissue>Blood</tissue>
    </source>
</reference>
<reference key="7">
    <citation type="journal article" date="1992" name="Gene Expr.">
        <title>Members of the USF family of helix-loop-helix proteins bind DNA as homo- as well as heterodimers.</title>
        <authorList>
            <person name="Sirito M."/>
            <person name="Walker S."/>
            <person name="Lin Q."/>
            <person name="Kozlowski M.T."/>
            <person name="Klein W.H."/>
            <person name="Sawadogo M."/>
        </authorList>
    </citation>
    <scope>NUCLEOTIDE SEQUENCE [MRNA] OF 46-346</scope>
    <source>
        <tissue>B-cell</tissue>
    </source>
</reference>
<reference key="8">
    <citation type="journal article" date="1992" name="Science">
        <title>Interaction cloning: identification of a helix-loop-helix zipper protein that interacts with c-Fos.</title>
        <authorList>
            <person name="Blanar M.A."/>
            <person name="Rutter W.J."/>
        </authorList>
    </citation>
    <scope>NUCLEOTIDE SEQUENCE [MRNA] OF 93-346</scope>
</reference>
<evidence type="ECO:0000250" key="1"/>
<evidence type="ECO:0000255" key="2">
    <source>
        <dbReference type="PROSITE-ProRule" id="PRU00981"/>
    </source>
</evidence>
<evidence type="ECO:0000256" key="3">
    <source>
        <dbReference type="SAM" id="MobiDB-lite"/>
    </source>
</evidence>
<evidence type="ECO:0000303" key="4">
    <source>
    </source>
</evidence>
<evidence type="ECO:0000303" key="5">
    <source>
    </source>
</evidence>
<evidence type="ECO:0000305" key="6"/>
<evidence type="ECO:0007829" key="7">
    <source>
        <dbReference type="PDB" id="8IA3"/>
    </source>
</evidence>